<name>ATPG_EHRCJ</name>
<reference key="1">
    <citation type="journal article" date="2006" name="J. Bacteriol.">
        <title>The genome of the obligately intracellular bacterium Ehrlichia canis reveals themes of complex membrane structure and immune evasion strategies.</title>
        <authorList>
            <person name="Mavromatis K."/>
            <person name="Doyle C.K."/>
            <person name="Lykidis A."/>
            <person name="Ivanova N."/>
            <person name="Francino M.P."/>
            <person name="Chain P."/>
            <person name="Shin M."/>
            <person name="Malfatti S."/>
            <person name="Larimer F."/>
            <person name="Copeland A."/>
            <person name="Detter J.C."/>
            <person name="Land M."/>
            <person name="Richardson P.M."/>
            <person name="Yu X.J."/>
            <person name="Walker D.H."/>
            <person name="McBride J.W."/>
            <person name="Kyrpides N.C."/>
        </authorList>
    </citation>
    <scope>NUCLEOTIDE SEQUENCE [LARGE SCALE GENOMIC DNA]</scope>
    <source>
        <strain>Jake</strain>
    </source>
</reference>
<feature type="chain" id="PRO_1000053206" description="ATP synthase gamma chain">
    <location>
        <begin position="1"/>
        <end position="281"/>
    </location>
</feature>
<comment type="function">
    <text evidence="1">Produces ATP from ADP in the presence of a proton gradient across the membrane. The gamma chain is believed to be important in regulating ATPase activity and the flow of protons through the CF(0) complex.</text>
</comment>
<comment type="subunit">
    <text evidence="1">F-type ATPases have 2 components, CF(1) - the catalytic core - and CF(0) - the membrane proton channel. CF(1) has five subunits: alpha(3), beta(3), gamma(1), delta(1), epsilon(1). CF(0) has three main subunits: a, b and c.</text>
</comment>
<comment type="subcellular location">
    <subcellularLocation>
        <location evidence="1">Cell inner membrane</location>
        <topology evidence="1">Peripheral membrane protein</topology>
    </subcellularLocation>
</comment>
<comment type="similarity">
    <text evidence="1">Belongs to the ATPase gamma chain family.</text>
</comment>
<proteinExistence type="inferred from homology"/>
<dbReference type="EMBL" id="CP000107">
    <property type="protein sequence ID" value="AAZ68431.1"/>
    <property type="molecule type" value="Genomic_DNA"/>
</dbReference>
<dbReference type="RefSeq" id="WP_011304509.1">
    <property type="nucleotide sequence ID" value="NC_007354.1"/>
</dbReference>
<dbReference type="SMR" id="Q3YS74"/>
<dbReference type="FunCoup" id="Q3YS74">
    <property type="interactions" value="261"/>
</dbReference>
<dbReference type="STRING" id="269484.Ecaj_0388"/>
<dbReference type="KEGG" id="ecn:Ecaj_0388"/>
<dbReference type="eggNOG" id="COG0224">
    <property type="taxonomic scope" value="Bacteria"/>
</dbReference>
<dbReference type="HOGENOM" id="CLU_050669_0_1_5"/>
<dbReference type="InParanoid" id="Q3YS74"/>
<dbReference type="Proteomes" id="UP000000435">
    <property type="component" value="Chromosome"/>
</dbReference>
<dbReference type="GO" id="GO:0005886">
    <property type="term" value="C:plasma membrane"/>
    <property type="evidence" value="ECO:0007669"/>
    <property type="project" value="UniProtKB-SubCell"/>
</dbReference>
<dbReference type="GO" id="GO:0045259">
    <property type="term" value="C:proton-transporting ATP synthase complex"/>
    <property type="evidence" value="ECO:0007669"/>
    <property type="project" value="UniProtKB-KW"/>
</dbReference>
<dbReference type="GO" id="GO:0005524">
    <property type="term" value="F:ATP binding"/>
    <property type="evidence" value="ECO:0007669"/>
    <property type="project" value="UniProtKB-UniRule"/>
</dbReference>
<dbReference type="GO" id="GO:0046933">
    <property type="term" value="F:proton-transporting ATP synthase activity, rotational mechanism"/>
    <property type="evidence" value="ECO:0007669"/>
    <property type="project" value="UniProtKB-UniRule"/>
</dbReference>
<dbReference type="GO" id="GO:0042777">
    <property type="term" value="P:proton motive force-driven plasma membrane ATP synthesis"/>
    <property type="evidence" value="ECO:0007669"/>
    <property type="project" value="UniProtKB-UniRule"/>
</dbReference>
<dbReference type="CDD" id="cd12151">
    <property type="entry name" value="F1-ATPase_gamma"/>
    <property type="match status" value="1"/>
</dbReference>
<dbReference type="Gene3D" id="3.40.1380.10">
    <property type="match status" value="1"/>
</dbReference>
<dbReference type="Gene3D" id="1.10.287.80">
    <property type="entry name" value="ATP synthase, gamma subunit, helix hairpin domain"/>
    <property type="match status" value="1"/>
</dbReference>
<dbReference type="HAMAP" id="MF_00815">
    <property type="entry name" value="ATP_synth_gamma_bact"/>
    <property type="match status" value="1"/>
</dbReference>
<dbReference type="InterPro" id="IPR035968">
    <property type="entry name" value="ATP_synth_F1_ATPase_gsu"/>
</dbReference>
<dbReference type="InterPro" id="IPR000131">
    <property type="entry name" value="ATP_synth_F1_gsu"/>
</dbReference>
<dbReference type="NCBIfam" id="TIGR01146">
    <property type="entry name" value="ATPsyn_F1gamma"/>
    <property type="match status" value="1"/>
</dbReference>
<dbReference type="PANTHER" id="PTHR11693">
    <property type="entry name" value="ATP SYNTHASE GAMMA CHAIN"/>
    <property type="match status" value="1"/>
</dbReference>
<dbReference type="PANTHER" id="PTHR11693:SF22">
    <property type="entry name" value="ATP SYNTHASE SUBUNIT GAMMA, MITOCHONDRIAL"/>
    <property type="match status" value="1"/>
</dbReference>
<dbReference type="Pfam" id="PF00231">
    <property type="entry name" value="ATP-synt"/>
    <property type="match status" value="1"/>
</dbReference>
<dbReference type="PRINTS" id="PR00126">
    <property type="entry name" value="ATPASEGAMMA"/>
</dbReference>
<dbReference type="SUPFAM" id="SSF52943">
    <property type="entry name" value="ATP synthase (F1-ATPase), gamma subunit"/>
    <property type="match status" value="1"/>
</dbReference>
<protein>
    <recommendedName>
        <fullName evidence="1">ATP synthase gamma chain</fullName>
    </recommendedName>
    <alternativeName>
        <fullName evidence="1">ATP synthase F1 sector gamma subunit</fullName>
    </alternativeName>
    <alternativeName>
        <fullName evidence="1">F-ATPase gamma subunit</fullName>
    </alternativeName>
</protein>
<gene>
    <name evidence="1" type="primary">atpG</name>
    <name type="ordered locus">Ecaj_0388</name>
</gene>
<evidence type="ECO:0000255" key="1">
    <source>
        <dbReference type="HAMAP-Rule" id="MF_00815"/>
    </source>
</evidence>
<accession>Q3YS74</accession>
<organism>
    <name type="scientific">Ehrlichia canis (strain Jake)</name>
    <dbReference type="NCBI Taxonomy" id="269484"/>
    <lineage>
        <taxon>Bacteria</taxon>
        <taxon>Pseudomonadati</taxon>
        <taxon>Pseudomonadota</taxon>
        <taxon>Alphaproteobacteria</taxon>
        <taxon>Rickettsiales</taxon>
        <taxon>Anaplasmataceae</taxon>
        <taxon>Ehrlichia</taxon>
    </lineage>
</organism>
<keyword id="KW-0066">ATP synthesis</keyword>
<keyword id="KW-0997">Cell inner membrane</keyword>
<keyword id="KW-1003">Cell membrane</keyword>
<keyword id="KW-0139">CF(1)</keyword>
<keyword id="KW-0375">Hydrogen ion transport</keyword>
<keyword id="KW-0406">Ion transport</keyword>
<keyword id="KW-0472">Membrane</keyword>
<keyword id="KW-0813">Transport</keyword>
<sequence>MANLKALLLRIKSVKSIQKTTKVMQMISAAKLHRVQQKLENARKHLLEISNVIDSVDKDNVSDVFSKHKKEKVLLVIMSSDRGLCGNFNNLIVKFTKSYIEDLESDNKEVNLLFFGKKAYDMMYSQYSDKILNVLPDVKSITNFLYFKLFVYSSGVNFEKFDNVIVLFNKFYSTILQKPSAQELIPCNVEMSVLLKEMYQYEPTYIDVISTISLGYILNLMYIAFLENSASEHCSRMIAMESANRNTKDMLNKLALEYNRSRQASITTDLIEIISGFESLN</sequence>